<organism>
    <name type="scientific">Verticillium dahliae (strain VdLs.17 / ATCC MYA-4575 / FGSC 10137)</name>
    <name type="common">Verticillium wilt</name>
    <dbReference type="NCBI Taxonomy" id="498257"/>
    <lineage>
        <taxon>Eukaryota</taxon>
        <taxon>Fungi</taxon>
        <taxon>Dikarya</taxon>
        <taxon>Ascomycota</taxon>
        <taxon>Pezizomycotina</taxon>
        <taxon>Sordariomycetes</taxon>
        <taxon>Hypocreomycetidae</taxon>
        <taxon>Glomerellales</taxon>
        <taxon>Plectosphaerellaceae</taxon>
        <taxon>Verticillium</taxon>
    </lineage>
</organism>
<reference key="1">
    <citation type="journal article" date="2011" name="PLoS Pathog.">
        <title>Comparative genomics yields insights into niche adaptation of plant vascular wilt pathogens.</title>
        <authorList>
            <person name="Klosterman S.J."/>
            <person name="Subbarao K.V."/>
            <person name="Kang S."/>
            <person name="Veronese P."/>
            <person name="Gold S.E."/>
            <person name="Thomma B.P.H.J."/>
            <person name="Chen Z."/>
            <person name="Henrissat B."/>
            <person name="Lee Y.-H."/>
            <person name="Park J."/>
            <person name="Garcia-Pedrajas M.D."/>
            <person name="Barbara D.J."/>
            <person name="Anchieta A."/>
            <person name="de Jonge R."/>
            <person name="Santhanam P."/>
            <person name="Maruthachalam K."/>
            <person name="Atallah Z."/>
            <person name="Amyotte S.G."/>
            <person name="Paz Z."/>
            <person name="Inderbitzin P."/>
            <person name="Hayes R.J."/>
            <person name="Heiman D.I."/>
            <person name="Young S."/>
            <person name="Zeng Q."/>
            <person name="Engels R."/>
            <person name="Galagan J."/>
            <person name="Cuomo C.A."/>
            <person name="Dobinson K.F."/>
            <person name="Ma L.-J."/>
        </authorList>
    </citation>
    <scope>NUCLEOTIDE SEQUENCE [LARGE SCALE GENOMIC DNA]</scope>
    <source>
        <strain>VdLs.17 / ATCC MYA-4575 / FGSC 10137</strain>
    </source>
</reference>
<reference key="2">
    <citation type="journal article" date="2022" name="J. Fungi">
        <title>Chitin Synthase Genes Are Differentially Required for Growth, Stress Response, and Virulence in Verticillium dahliae.</title>
        <authorList>
            <person name="Qin J."/>
            <person name="Zhao P."/>
            <person name="Ye Z."/>
            <person name="Sun L."/>
            <person name="Hu X."/>
            <person name="Zhang J."/>
        </authorList>
    </citation>
    <scope>FUNCTION</scope>
    <scope>DISRUPTION PHENOTYPE</scope>
</reference>
<name>CHS6_VERDV</name>
<protein>
    <recommendedName>
        <fullName evidence="8">Chitin synthase 6</fullName>
        <ecNumber evidence="10">2.4.1.16</ecNumber>
    </recommendedName>
    <alternativeName>
        <fullName evidence="9">Chitin-UDP acetyl-glucosaminyl transferase 6</fullName>
    </alternativeName>
    <alternativeName>
        <fullName evidence="9">Class-V chitin synthase 6</fullName>
    </alternativeName>
</protein>
<accession>G2WS87</accession>
<dbReference type="EC" id="2.4.1.16" evidence="10"/>
<dbReference type="EMBL" id="DS572695">
    <property type="protein sequence ID" value="EGY13738.1"/>
    <property type="molecule type" value="Genomic_DNA"/>
</dbReference>
<dbReference type="RefSeq" id="XP_009650092.1">
    <property type="nucleotide sequence ID" value="XM_009651797.1"/>
</dbReference>
<dbReference type="SMR" id="G2WS87"/>
<dbReference type="STRING" id="498257.G2WS87"/>
<dbReference type="EnsemblFungi" id="EGY13738">
    <property type="protein sequence ID" value="EGY13738"/>
    <property type="gene ID" value="VDAG_00420"/>
</dbReference>
<dbReference type="GeneID" id="20701883"/>
<dbReference type="KEGG" id="vda:VDAG_00420"/>
<dbReference type="eggNOG" id="KOG2571">
    <property type="taxonomic scope" value="Eukaryota"/>
</dbReference>
<dbReference type="eggNOG" id="KOG4229">
    <property type="taxonomic scope" value="Eukaryota"/>
</dbReference>
<dbReference type="HOGENOM" id="CLU_000192_0_2_1"/>
<dbReference type="InParanoid" id="G2WS87"/>
<dbReference type="OMA" id="LEMHHQI"/>
<dbReference type="OrthoDB" id="30871at1028384"/>
<dbReference type="PHI-base" id="PHI:123308"/>
<dbReference type="Proteomes" id="UP000001611">
    <property type="component" value="Chromosome 2"/>
</dbReference>
<dbReference type="GO" id="GO:0030428">
    <property type="term" value="C:cell septum"/>
    <property type="evidence" value="ECO:0007669"/>
    <property type="project" value="TreeGrafter"/>
</dbReference>
<dbReference type="GO" id="GO:0016459">
    <property type="term" value="C:myosin complex"/>
    <property type="evidence" value="ECO:0007669"/>
    <property type="project" value="UniProtKB-KW"/>
</dbReference>
<dbReference type="GO" id="GO:0005886">
    <property type="term" value="C:plasma membrane"/>
    <property type="evidence" value="ECO:0007669"/>
    <property type="project" value="UniProtKB-SubCell"/>
</dbReference>
<dbReference type="GO" id="GO:0003779">
    <property type="term" value="F:actin binding"/>
    <property type="evidence" value="ECO:0007669"/>
    <property type="project" value="UniProtKB-KW"/>
</dbReference>
<dbReference type="GO" id="GO:0005524">
    <property type="term" value="F:ATP binding"/>
    <property type="evidence" value="ECO:0007669"/>
    <property type="project" value="UniProtKB-KW"/>
</dbReference>
<dbReference type="GO" id="GO:0004100">
    <property type="term" value="F:chitin synthase activity"/>
    <property type="evidence" value="ECO:0007669"/>
    <property type="project" value="UniProtKB-EC"/>
</dbReference>
<dbReference type="GO" id="GO:0003774">
    <property type="term" value="F:cytoskeletal motor activity"/>
    <property type="evidence" value="ECO:0007669"/>
    <property type="project" value="InterPro"/>
</dbReference>
<dbReference type="GO" id="GO:0006031">
    <property type="term" value="P:chitin biosynthetic process"/>
    <property type="evidence" value="ECO:0007669"/>
    <property type="project" value="TreeGrafter"/>
</dbReference>
<dbReference type="GO" id="GO:0031505">
    <property type="term" value="P:fungal-type cell wall organization"/>
    <property type="evidence" value="ECO:0007669"/>
    <property type="project" value="TreeGrafter"/>
</dbReference>
<dbReference type="CDD" id="cd14879">
    <property type="entry name" value="MYSc_Myo17"/>
    <property type="match status" value="1"/>
</dbReference>
<dbReference type="FunFam" id="1.10.10.60:FF:000337">
    <property type="entry name" value="Chitin synthase 8"/>
    <property type="match status" value="1"/>
</dbReference>
<dbReference type="FunFam" id="1.10.10.820:FF:000012">
    <property type="entry name" value="Chitin synthase ChsE"/>
    <property type="match status" value="1"/>
</dbReference>
<dbReference type="FunFam" id="1.20.58.530:FF:000017">
    <property type="entry name" value="Chitin synthase ChsE"/>
    <property type="match status" value="1"/>
</dbReference>
<dbReference type="FunFam" id="3.40.850.10:FF:000055">
    <property type="entry name" value="Chitin synthase ChsE"/>
    <property type="match status" value="1"/>
</dbReference>
<dbReference type="Gene3D" id="1.10.10.820">
    <property type="match status" value="1"/>
</dbReference>
<dbReference type="Gene3D" id="1.20.58.530">
    <property type="match status" value="1"/>
</dbReference>
<dbReference type="Gene3D" id="3.10.120.10">
    <property type="entry name" value="Cytochrome b5-like heme/steroid binding domain"/>
    <property type="match status" value="1"/>
</dbReference>
<dbReference type="Gene3D" id="1.10.10.60">
    <property type="entry name" value="Homeodomain-like"/>
    <property type="match status" value="1"/>
</dbReference>
<dbReference type="Gene3D" id="3.40.850.10">
    <property type="entry name" value="Kinesin motor domain"/>
    <property type="match status" value="1"/>
</dbReference>
<dbReference type="Gene3D" id="1.20.120.720">
    <property type="entry name" value="Myosin VI head, motor domain, U50 subdomain"/>
    <property type="match status" value="1"/>
</dbReference>
<dbReference type="Gene3D" id="3.90.550.10">
    <property type="entry name" value="Spore Coat Polysaccharide Biosynthesis Protein SpsA, Chain A"/>
    <property type="match status" value="1"/>
</dbReference>
<dbReference type="InterPro" id="IPR004835">
    <property type="entry name" value="Chitin_synth"/>
</dbReference>
<dbReference type="InterPro" id="IPR001199">
    <property type="entry name" value="Cyt_B5-like_heme/steroid-bd"/>
</dbReference>
<dbReference type="InterPro" id="IPR036400">
    <property type="entry name" value="Cyt_B5-like_heme/steroid_sf"/>
</dbReference>
<dbReference type="InterPro" id="IPR014876">
    <property type="entry name" value="DEK_C"/>
</dbReference>
<dbReference type="InterPro" id="IPR036961">
    <property type="entry name" value="Kinesin_motor_dom_sf"/>
</dbReference>
<dbReference type="InterPro" id="IPR001609">
    <property type="entry name" value="Myosin_head_motor_dom-like"/>
</dbReference>
<dbReference type="InterPro" id="IPR036037">
    <property type="entry name" value="MYSc_Myo17"/>
</dbReference>
<dbReference type="InterPro" id="IPR029044">
    <property type="entry name" value="Nucleotide-diphossugar_trans"/>
</dbReference>
<dbReference type="InterPro" id="IPR027417">
    <property type="entry name" value="P-loop_NTPase"/>
</dbReference>
<dbReference type="PANTHER" id="PTHR22914">
    <property type="entry name" value="CHITIN SYNTHASE"/>
    <property type="match status" value="1"/>
</dbReference>
<dbReference type="PANTHER" id="PTHR22914:SF45">
    <property type="entry name" value="CHITIN SYNTHASE"/>
    <property type="match status" value="1"/>
</dbReference>
<dbReference type="Pfam" id="PF03142">
    <property type="entry name" value="Chitin_synth_2"/>
    <property type="match status" value="1"/>
</dbReference>
<dbReference type="Pfam" id="PF00173">
    <property type="entry name" value="Cyt-b5"/>
    <property type="match status" value="1"/>
</dbReference>
<dbReference type="Pfam" id="PF08766">
    <property type="entry name" value="DEK_C"/>
    <property type="match status" value="1"/>
</dbReference>
<dbReference type="Pfam" id="PF00063">
    <property type="entry name" value="Myosin_head"/>
    <property type="match status" value="1"/>
</dbReference>
<dbReference type="SMART" id="SM01117">
    <property type="entry name" value="Cyt-b5"/>
    <property type="match status" value="2"/>
</dbReference>
<dbReference type="SMART" id="SM00242">
    <property type="entry name" value="MYSc"/>
    <property type="match status" value="1"/>
</dbReference>
<dbReference type="SUPFAM" id="SSF55856">
    <property type="entry name" value="Cytochrome b5-like heme/steroid binding domain"/>
    <property type="match status" value="1"/>
</dbReference>
<dbReference type="SUPFAM" id="SSF109715">
    <property type="entry name" value="DEK C-terminal domain"/>
    <property type="match status" value="1"/>
</dbReference>
<dbReference type="SUPFAM" id="SSF53448">
    <property type="entry name" value="Nucleotide-diphospho-sugar transferases"/>
    <property type="match status" value="1"/>
</dbReference>
<dbReference type="SUPFAM" id="SSF52540">
    <property type="entry name" value="P-loop containing nucleoside triphosphate hydrolases"/>
    <property type="match status" value="1"/>
</dbReference>
<dbReference type="PROSITE" id="PS50255">
    <property type="entry name" value="CYTOCHROME_B5_2"/>
    <property type="match status" value="1"/>
</dbReference>
<dbReference type="PROSITE" id="PS51998">
    <property type="entry name" value="DEK_C"/>
    <property type="match status" value="1"/>
</dbReference>
<dbReference type="PROSITE" id="PS51456">
    <property type="entry name" value="MYOSIN_MOTOR"/>
    <property type="match status" value="1"/>
</dbReference>
<feature type="chain" id="PRO_0000460805" description="Chitin synthase 6">
    <location>
        <begin position="1"/>
        <end position="1869"/>
    </location>
</feature>
<feature type="transmembrane region" description="Helical" evidence="1">
    <location>
        <begin position="886"/>
        <end position="906"/>
    </location>
</feature>
<feature type="transmembrane region" description="Helical" evidence="1">
    <location>
        <begin position="925"/>
        <end position="945"/>
    </location>
</feature>
<feature type="transmembrane region" description="Helical" evidence="1">
    <location>
        <begin position="1201"/>
        <end position="1221"/>
    </location>
</feature>
<feature type="transmembrane region" description="Helical" evidence="1">
    <location>
        <begin position="1596"/>
        <end position="1616"/>
    </location>
</feature>
<feature type="transmembrane region" description="Helical" evidence="1">
    <location>
        <begin position="1622"/>
        <end position="1642"/>
    </location>
</feature>
<feature type="transmembrane region" description="Helical" evidence="1">
    <location>
        <begin position="1649"/>
        <end position="1669"/>
    </location>
</feature>
<feature type="domain" description="Myosin motor" evidence="4">
    <location>
        <begin position="1"/>
        <end position="778"/>
    </location>
</feature>
<feature type="domain" description="Cytochrome b5 heme-binding" evidence="2">
    <location>
        <begin position="949"/>
        <end position="1010"/>
    </location>
</feature>
<feature type="domain" description="DEK-C" evidence="5">
    <location>
        <begin position="1811"/>
        <end position="1866"/>
    </location>
</feature>
<feature type="region of interest" description="Disordered" evidence="6">
    <location>
        <begin position="1"/>
        <end position="23"/>
    </location>
</feature>
<feature type="region of interest" description="Disordered" evidence="6">
    <location>
        <begin position="593"/>
        <end position="612"/>
    </location>
</feature>
<feature type="region of interest" description="Disordered" evidence="6">
    <location>
        <begin position="620"/>
        <end position="640"/>
    </location>
</feature>
<feature type="region of interest" description="Actin-binding" evidence="4">
    <location>
        <begin position="655"/>
        <end position="679"/>
    </location>
</feature>
<feature type="compositionally biased region" description="Low complexity" evidence="6">
    <location>
        <begin position="629"/>
        <end position="640"/>
    </location>
</feature>
<feature type="binding site" evidence="4">
    <location>
        <begin position="104"/>
        <end position="111"/>
    </location>
    <ligand>
        <name>ATP</name>
        <dbReference type="ChEBI" id="CHEBI:30616"/>
    </ligand>
</feature>
<feature type="glycosylation site" description="N-linked (GlcNAc...) asparagine" evidence="3">
    <location>
        <position position="123"/>
    </location>
</feature>
<feature type="glycosylation site" description="N-linked (GlcNAc...) asparagine" evidence="3">
    <location>
        <position position="417"/>
    </location>
</feature>
<feature type="glycosylation site" description="N-linked (GlcNAc...) asparagine" evidence="3">
    <location>
        <position position="426"/>
    </location>
</feature>
<feature type="glycosylation site" description="N-linked (GlcNAc...) asparagine" evidence="3">
    <location>
        <position position="557"/>
    </location>
</feature>
<feature type="glycosylation site" description="N-linked (GlcNAc...) asparagine" evidence="3">
    <location>
        <position position="630"/>
    </location>
</feature>
<feature type="glycosylation site" description="N-linked (GlcNAc...) asparagine" evidence="3">
    <location>
        <position position="657"/>
    </location>
</feature>
<feature type="glycosylation site" description="N-linked (GlcNAc...) asparagine" evidence="3">
    <location>
        <position position="1037"/>
    </location>
</feature>
<feature type="glycosylation site" description="N-linked (GlcNAc...) asparagine" evidence="3">
    <location>
        <position position="1062"/>
    </location>
</feature>
<feature type="glycosylation site" description="N-linked (GlcNAc...) asparagine" evidence="3">
    <location>
        <position position="1165"/>
    </location>
</feature>
<feature type="glycosylation site" description="N-linked (GlcNAc...) asparagine" evidence="3">
    <location>
        <position position="1458"/>
    </location>
</feature>
<feature type="glycosylation site" description="N-linked (GlcNAc...) asparagine" evidence="3">
    <location>
        <position position="1564"/>
    </location>
</feature>
<feature type="glycosylation site" description="N-linked (GlcNAc...) asparagine" evidence="3">
    <location>
        <position position="1778"/>
    </location>
</feature>
<comment type="function">
    <text evidence="7 10">Polymerizes chitin, a structural polymer of the cell wall and septum, by transferring the sugar moiety of UDP-GlcNAc to the non-reducing end of the growing chitin polymer (Probable). Plays a role in cell wall integrity and is involved in tolerance to hyperosmotic conditions (PubMed:35887437). Required to successfully penetrate the host plants and thus plays a key role in pathogenicity (PubMed:35887437).</text>
</comment>
<comment type="catalytic activity">
    <reaction evidence="10">
        <text>[(1-&gt;4)-N-acetyl-beta-D-glucosaminyl](n) + UDP-N-acetyl-alpha-D-glucosamine = [(1-&gt;4)-N-acetyl-beta-D-glucosaminyl](n+1) + UDP + H(+)</text>
        <dbReference type="Rhea" id="RHEA:16637"/>
        <dbReference type="Rhea" id="RHEA-COMP:9593"/>
        <dbReference type="Rhea" id="RHEA-COMP:9595"/>
        <dbReference type="ChEBI" id="CHEBI:15378"/>
        <dbReference type="ChEBI" id="CHEBI:17029"/>
        <dbReference type="ChEBI" id="CHEBI:57705"/>
        <dbReference type="ChEBI" id="CHEBI:58223"/>
        <dbReference type="EC" id="2.4.1.16"/>
    </reaction>
    <physiologicalReaction direction="left-to-right" evidence="10">
        <dbReference type="Rhea" id="RHEA:16638"/>
    </physiologicalReaction>
</comment>
<comment type="subcellular location">
    <subcellularLocation>
        <location evidence="9">Cell membrane</location>
        <topology evidence="1">Multi-pass membrane protein</topology>
    </subcellularLocation>
</comment>
<comment type="disruption phenotype">
    <text evidence="7">Leads to a winkled surface morphology (PubMed:35887437). Impairs penetration in host plants and exhibits a significant reduced pathogenicity in Arabidopsis and cotton plants (PubMed:35887437).</text>
</comment>
<comment type="similarity">
    <text evidence="9">In the N-terminal section; belongs to the TRAFAC class myosin-kinesin ATPase superfamily. Myosin family.</text>
</comment>
<comment type="similarity">
    <text evidence="9">In the C-terminal section; belongs to the chitin synthase family. Class V subfamily.</text>
</comment>
<sequence length="1869" mass="207091">MAMNLPPLAGSGGAHTQPSLPALPAHLQSDTHLTAHLASRFHLSLPTAQLSSHALISLNTYTSSSKGPDGGKEGSAMAGAEEMAERAWLRLGHRSENQAVVFLGESGSGKSTLRSHLLASLLNKSSTPLSTKVSLAAYVFDTLTTTKTATTPTASKAGLFYELQYDTASTTNPVLIGGKLLDHRLERSRIADVPTGERNFHVLYYLLAGTSPAEKAHLGLEDSAVQQRRWKYLGHPTQLKVGINDAEGFQVFKNALKKLEFPRSEIAEICQILASVLHIGQLEFESSANTQVTGDDSGGFSHEGATVVTAAKNKDVLAIIAAFLGVNAQDLQNTLSYKTKMIHKERVTVMLDPNGARSHANELARTIYSLLVTYIIESINQRLCAADDAVANTISIIDFPGFEQQASTKSALDQLLNNSATEALYNLTLQNFFDRKADMLENEEVSVAATSYFDNSDAVRGLLKPGNGLLSILDDQSRRHRTDIQFLESMRKRFEGKNPAITAGSSTAKLPGSNFLTENSAPIFTVKHFAGEVDYQVKGLTEENGEVISGDLLNMINSTKSEFVARLFGQDALQTVTHPKERSTVMQATISSKPMRTPSVMSRKTARTARNQRVLQQKAAEEELEKLSENNSQAGGAAKAAASEQGASGQFLAALDNVTKAVADPSTNSYFVFCLKPNDRRIASQFDSKCVRTQVQTFGIAEISQRLRSADFSLFLPFGEFLGLADAETILMGSERERVEMVVEDKRWPSNEVRIGSTGVFVSERCWMEIAHLSEASLAHGRFGLPSDGGDGLTPHGASPADPFAASKERLLSTGNTPLMYGEKGKNGYFGANDGSDSRSEAGVSAFGGGDMFKNFDTREQMAERGNEKSLVEVEEYRDSASRKRWLFMVYLLTWFIPDFLIRFIGRMPRKDVRMAWREKLAINLIIWLSCLLAAFFIVVFPMLICPRQHVYSAAELSAYDGSSGSPGAYVSIRGYVFDLEKFAPRHYPPNLVSTEDILEYAGKDATSLFPVQVSALCQGRAGSIDPAVLIDYRSTNVTGSPTLISQQDINANFHDFRYFTNDTRKDWYFQQMAMLRANYLKGRIGYSPKYMKTLARNSRTIVSMNGRVFDLTEYVVGGRRTVGEDGKDISGVAEDSYDFMEPDVVTLFRQLSGADATRHWASLNLSEQAKTRMLTCLNNLFYVGDVDTRSSVRCKFAEYLVLAISIMLVTIIAFKFFAALQFGTKNMPENLDKFIMCQIPAYTEDEDSLRRAIDSAARMHYDDKRKLLVVICDGMIVGQGNDRSTPRIVLDILGVSETVDPEPLSFESLGEGLKQHNMGKVYSGLYEVQGHIVPFLVVVKVGKPSEVSRPGNRGKRDSQMVIMRFLNRVHYNLAMSPLELEMYHQIRNIIGVNPTFYEFMFQIDADTVVAPDSATRMVSAFLDDTRLIAVCGETALTNAKSSFITMIQVYEYWISHNLTKAFESLFGSVTCLPGCFSMYRIRAAETGKPLFVSREIVEAYATIRVDTLHMKNLLHLGEDRYLTTLLLKFHNKYKTKYIFRAHAWTIAPDSWAVFMSQRRRWINSTVHNLIELIPMAQLCGFCCFSMRFIVFVDLLSTVLQPVTMAYIVYLIVMVIRSPDVVPVTAFILIAAVFGLQAIIFILRRKWEMIGWMVLYILAIPVFSFGLPLYSFWYMDDFNWGNTRVVAGEKGKKIIVTDEGKFDPASIPRKKWEEYQGEIWEAQTVRDDARSEVSGFSYATKGHPGVQVGVSEYGGYSRPGSIAGGFSGAHAMPPLPMNTSRMSLAASEMGGNRASQFGGSQYFSPEDMVGLPSDDALLAEIREILRTADLMTVTKKGIKQELERRFGVPLDAKRAYINSATEALLSGQL</sequence>
<keyword id="KW-0009">Actin-binding</keyword>
<keyword id="KW-0067">ATP-binding</keyword>
<keyword id="KW-1003">Cell membrane</keyword>
<keyword id="KW-0325">Glycoprotein</keyword>
<keyword id="KW-0328">Glycosyltransferase</keyword>
<keyword id="KW-0472">Membrane</keyword>
<keyword id="KW-0505">Motor protein</keyword>
<keyword id="KW-0518">Myosin</keyword>
<keyword id="KW-0547">Nucleotide-binding</keyword>
<keyword id="KW-1185">Reference proteome</keyword>
<keyword id="KW-0808">Transferase</keyword>
<keyword id="KW-0812">Transmembrane</keyword>
<keyword id="KW-1133">Transmembrane helix</keyword>
<keyword id="KW-0843">Virulence</keyword>
<proteinExistence type="inferred from homology"/>
<evidence type="ECO:0000255" key="1"/>
<evidence type="ECO:0000255" key="2">
    <source>
        <dbReference type="PROSITE-ProRule" id="PRU00279"/>
    </source>
</evidence>
<evidence type="ECO:0000255" key="3">
    <source>
        <dbReference type="PROSITE-ProRule" id="PRU00498"/>
    </source>
</evidence>
<evidence type="ECO:0000255" key="4">
    <source>
        <dbReference type="PROSITE-ProRule" id="PRU00782"/>
    </source>
</evidence>
<evidence type="ECO:0000255" key="5">
    <source>
        <dbReference type="PROSITE-ProRule" id="PRU01342"/>
    </source>
</evidence>
<evidence type="ECO:0000256" key="6">
    <source>
        <dbReference type="SAM" id="MobiDB-lite"/>
    </source>
</evidence>
<evidence type="ECO:0000269" key="7">
    <source>
    </source>
</evidence>
<evidence type="ECO:0000303" key="8">
    <source>
    </source>
</evidence>
<evidence type="ECO:0000305" key="9"/>
<evidence type="ECO:0000305" key="10">
    <source>
    </source>
</evidence>
<gene>
    <name evidence="8" type="primary">CHS6</name>
    <name type="ORF">VDAG_00420</name>
</gene>